<feature type="chain" id="PRO_0000151381" description="Ketol-acid reductoisomerase (NADP(+))">
    <location>
        <begin position="1"/>
        <end position="494"/>
    </location>
</feature>
<feature type="domain" description="KARI N-terminal Rossmann" evidence="2">
    <location>
        <begin position="14"/>
        <end position="208"/>
    </location>
</feature>
<feature type="domain" description="KARI C-terminal knotted 1" evidence="3">
    <location>
        <begin position="209"/>
        <end position="344"/>
    </location>
</feature>
<feature type="domain" description="KARI C-terminal knotted 2" evidence="3">
    <location>
        <begin position="345"/>
        <end position="487"/>
    </location>
</feature>
<feature type="active site" evidence="1">
    <location>
        <position position="132"/>
    </location>
</feature>
<feature type="binding site" evidence="1">
    <location>
        <begin position="45"/>
        <end position="48"/>
    </location>
    <ligand>
        <name>NADP(+)</name>
        <dbReference type="ChEBI" id="CHEBI:58349"/>
    </ligand>
</feature>
<feature type="binding site" evidence="1">
    <location>
        <position position="68"/>
    </location>
    <ligand>
        <name>NADP(+)</name>
        <dbReference type="ChEBI" id="CHEBI:58349"/>
    </ligand>
</feature>
<feature type="binding site" evidence="1">
    <location>
        <position position="76"/>
    </location>
    <ligand>
        <name>NADP(+)</name>
        <dbReference type="ChEBI" id="CHEBI:58349"/>
    </ligand>
</feature>
<feature type="binding site" evidence="1">
    <location>
        <position position="78"/>
    </location>
    <ligand>
        <name>NADP(+)</name>
        <dbReference type="ChEBI" id="CHEBI:58349"/>
    </ligand>
</feature>
<feature type="binding site" evidence="1">
    <location>
        <begin position="108"/>
        <end position="110"/>
    </location>
    <ligand>
        <name>NADP(+)</name>
        <dbReference type="ChEBI" id="CHEBI:58349"/>
    </ligand>
</feature>
<feature type="binding site" evidence="1">
    <location>
        <position position="158"/>
    </location>
    <ligand>
        <name>NADP(+)</name>
        <dbReference type="ChEBI" id="CHEBI:58349"/>
    </ligand>
</feature>
<feature type="binding site" evidence="1">
    <location>
        <position position="217"/>
    </location>
    <ligand>
        <name>Mg(2+)</name>
        <dbReference type="ChEBI" id="CHEBI:18420"/>
        <label>1</label>
    </ligand>
</feature>
<feature type="binding site" evidence="1">
    <location>
        <position position="217"/>
    </location>
    <ligand>
        <name>Mg(2+)</name>
        <dbReference type="ChEBI" id="CHEBI:18420"/>
        <label>2</label>
    </ligand>
</feature>
<feature type="binding site" evidence="1">
    <location>
        <position position="221"/>
    </location>
    <ligand>
        <name>Mg(2+)</name>
        <dbReference type="ChEBI" id="CHEBI:18420"/>
        <label>1</label>
    </ligand>
</feature>
<feature type="binding site" evidence="1">
    <location>
        <position position="389"/>
    </location>
    <ligand>
        <name>Mg(2+)</name>
        <dbReference type="ChEBI" id="CHEBI:18420"/>
        <label>2</label>
    </ligand>
</feature>
<feature type="binding site" evidence="1">
    <location>
        <position position="393"/>
    </location>
    <ligand>
        <name>Mg(2+)</name>
        <dbReference type="ChEBI" id="CHEBI:18420"/>
        <label>2</label>
    </ligand>
</feature>
<feature type="binding site" evidence="1">
    <location>
        <position position="414"/>
    </location>
    <ligand>
        <name>substrate</name>
    </ligand>
</feature>
<keyword id="KW-0028">Amino-acid biosynthesis</keyword>
<keyword id="KW-0100">Branched-chain amino acid biosynthesis</keyword>
<keyword id="KW-0460">Magnesium</keyword>
<keyword id="KW-0479">Metal-binding</keyword>
<keyword id="KW-0521">NADP</keyword>
<keyword id="KW-0560">Oxidoreductase</keyword>
<keyword id="KW-0677">Repeat</keyword>
<proteinExistence type="inferred from homology"/>
<protein>
    <recommendedName>
        <fullName evidence="1">Ketol-acid reductoisomerase (NADP(+))</fullName>
        <shortName evidence="1">KARI</shortName>
        <ecNumber evidence="1">1.1.1.86</ecNumber>
    </recommendedName>
    <alternativeName>
        <fullName evidence="1">Acetohydroxy-acid isomeroreductase</fullName>
        <shortName evidence="1">AHIR</shortName>
    </alternativeName>
    <alternativeName>
        <fullName evidence="1">Alpha-keto-beta-hydroxylacyl reductoisomerase</fullName>
    </alternativeName>
    <alternativeName>
        <fullName evidence="1">Ketol-acid reductoisomerase type 2</fullName>
    </alternativeName>
    <alternativeName>
        <fullName evidence="1">Ketol-acid reductoisomerase type II</fullName>
    </alternativeName>
</protein>
<comment type="function">
    <text evidence="1">Involved in the biosynthesis of branched-chain amino acids (BCAA). Catalyzes an alkyl-migration followed by a ketol-acid reduction of (S)-2-acetolactate (S2AL) to yield (R)-2,3-dihydroxy-isovalerate. In the isomerase reaction, S2AL is rearranged via a Mg-dependent methyl migration to produce 3-hydroxy-3-methyl-2-ketobutyrate (HMKB). In the reductase reaction, this 2-ketoacid undergoes a metal-dependent reduction by NADPH to yield (R)-2,3-dihydroxy-isovalerate.</text>
</comment>
<comment type="catalytic activity">
    <reaction evidence="1">
        <text>(2R)-2,3-dihydroxy-3-methylbutanoate + NADP(+) = (2S)-2-acetolactate + NADPH + H(+)</text>
        <dbReference type="Rhea" id="RHEA:22068"/>
        <dbReference type="ChEBI" id="CHEBI:15378"/>
        <dbReference type="ChEBI" id="CHEBI:49072"/>
        <dbReference type="ChEBI" id="CHEBI:57783"/>
        <dbReference type="ChEBI" id="CHEBI:58349"/>
        <dbReference type="ChEBI" id="CHEBI:58476"/>
        <dbReference type="EC" id="1.1.1.86"/>
    </reaction>
</comment>
<comment type="catalytic activity">
    <reaction evidence="1">
        <text>(2R,3R)-2,3-dihydroxy-3-methylpentanoate + NADP(+) = (S)-2-ethyl-2-hydroxy-3-oxobutanoate + NADPH + H(+)</text>
        <dbReference type="Rhea" id="RHEA:13493"/>
        <dbReference type="ChEBI" id="CHEBI:15378"/>
        <dbReference type="ChEBI" id="CHEBI:49256"/>
        <dbReference type="ChEBI" id="CHEBI:49258"/>
        <dbReference type="ChEBI" id="CHEBI:57783"/>
        <dbReference type="ChEBI" id="CHEBI:58349"/>
        <dbReference type="EC" id="1.1.1.86"/>
    </reaction>
</comment>
<comment type="cofactor">
    <cofactor evidence="1">
        <name>Mg(2+)</name>
        <dbReference type="ChEBI" id="CHEBI:18420"/>
    </cofactor>
    <text evidence="1">Binds 2 magnesium ions per subunit.</text>
</comment>
<comment type="pathway">
    <text evidence="1">Amino-acid biosynthesis; L-isoleucine biosynthesis; L-isoleucine from 2-oxobutanoate: step 2/4.</text>
</comment>
<comment type="pathway">
    <text evidence="1">Amino-acid biosynthesis; L-valine biosynthesis; L-valine from pyruvate: step 2/4.</text>
</comment>
<comment type="similarity">
    <text evidence="1">Belongs to the ketol-acid reductoisomerase family.</text>
</comment>
<name>ILVC_VIBVY</name>
<gene>
    <name evidence="1" type="primary">ilvC</name>
    <name type="ordered locus">VV0035</name>
</gene>
<reference key="1">
    <citation type="journal article" date="2003" name="Genome Res.">
        <title>Comparative genome analysis of Vibrio vulnificus, a marine pathogen.</title>
        <authorList>
            <person name="Chen C.-Y."/>
            <person name="Wu K.-M."/>
            <person name="Chang Y.-C."/>
            <person name="Chang C.-H."/>
            <person name="Tsai H.-C."/>
            <person name="Liao T.-L."/>
            <person name="Liu Y.-M."/>
            <person name="Chen H.-J."/>
            <person name="Shen A.B.-T."/>
            <person name="Li J.-C."/>
            <person name="Su T.-L."/>
            <person name="Shao C.-P."/>
            <person name="Lee C.-T."/>
            <person name="Hor L.-I."/>
            <person name="Tsai S.-F."/>
        </authorList>
    </citation>
    <scope>NUCLEOTIDE SEQUENCE [LARGE SCALE GENOMIC DNA]</scope>
    <source>
        <strain>YJ016</strain>
    </source>
</reference>
<evidence type="ECO:0000255" key="1">
    <source>
        <dbReference type="HAMAP-Rule" id="MF_00435"/>
    </source>
</evidence>
<evidence type="ECO:0000255" key="2">
    <source>
        <dbReference type="PROSITE-ProRule" id="PRU01197"/>
    </source>
</evidence>
<evidence type="ECO:0000255" key="3">
    <source>
        <dbReference type="PROSITE-ProRule" id="PRU01198"/>
    </source>
</evidence>
<dbReference type="EC" id="1.1.1.86" evidence="1"/>
<dbReference type="EMBL" id="BA000037">
    <property type="protein sequence ID" value="BAC92799.1"/>
    <property type="molecule type" value="Genomic_DNA"/>
</dbReference>
<dbReference type="RefSeq" id="WP_011079096.1">
    <property type="nucleotide sequence ID" value="NC_005139.1"/>
</dbReference>
<dbReference type="SMR" id="Q7MQH3"/>
<dbReference type="STRING" id="672.VV93_v1c00310"/>
<dbReference type="GeneID" id="93895355"/>
<dbReference type="KEGG" id="vvy:VV0035"/>
<dbReference type="PATRIC" id="fig|196600.6.peg.87"/>
<dbReference type="eggNOG" id="COG0059">
    <property type="taxonomic scope" value="Bacteria"/>
</dbReference>
<dbReference type="HOGENOM" id="CLU_551905_0_0_6"/>
<dbReference type="UniPathway" id="UPA00047">
    <property type="reaction ID" value="UER00056"/>
</dbReference>
<dbReference type="UniPathway" id="UPA00049">
    <property type="reaction ID" value="UER00060"/>
</dbReference>
<dbReference type="Proteomes" id="UP000002675">
    <property type="component" value="Chromosome I"/>
</dbReference>
<dbReference type="GO" id="GO:0005829">
    <property type="term" value="C:cytosol"/>
    <property type="evidence" value="ECO:0007669"/>
    <property type="project" value="TreeGrafter"/>
</dbReference>
<dbReference type="GO" id="GO:0004455">
    <property type="term" value="F:ketol-acid reductoisomerase activity"/>
    <property type="evidence" value="ECO:0007669"/>
    <property type="project" value="UniProtKB-UniRule"/>
</dbReference>
<dbReference type="GO" id="GO:0000287">
    <property type="term" value="F:magnesium ion binding"/>
    <property type="evidence" value="ECO:0007669"/>
    <property type="project" value="UniProtKB-UniRule"/>
</dbReference>
<dbReference type="GO" id="GO:0009097">
    <property type="term" value="P:isoleucine biosynthetic process"/>
    <property type="evidence" value="ECO:0007669"/>
    <property type="project" value="UniProtKB-UniRule"/>
</dbReference>
<dbReference type="GO" id="GO:0009099">
    <property type="term" value="P:L-valine biosynthetic process"/>
    <property type="evidence" value="ECO:0007669"/>
    <property type="project" value="UniProtKB-UniRule"/>
</dbReference>
<dbReference type="FunFam" id="1.10.1040.10:FF:000007">
    <property type="entry name" value="Ketol-acid reductoisomerase (NADP(+))"/>
    <property type="match status" value="1"/>
</dbReference>
<dbReference type="FunFam" id="3.40.50.720:FF:000043">
    <property type="entry name" value="Ketol-acid reductoisomerase (NADP(+))"/>
    <property type="match status" value="1"/>
</dbReference>
<dbReference type="Gene3D" id="1.10.1040.10">
    <property type="entry name" value="N-(1-d-carboxylethyl)-l-norvaline Dehydrogenase, domain 2"/>
    <property type="match status" value="1"/>
</dbReference>
<dbReference type="Gene3D" id="3.40.50.720">
    <property type="entry name" value="NAD(P)-binding Rossmann-like Domain"/>
    <property type="match status" value="1"/>
</dbReference>
<dbReference type="HAMAP" id="MF_00435">
    <property type="entry name" value="IlvC"/>
    <property type="match status" value="1"/>
</dbReference>
<dbReference type="InterPro" id="IPR008927">
    <property type="entry name" value="6-PGluconate_DH-like_C_sf"/>
</dbReference>
<dbReference type="InterPro" id="IPR013328">
    <property type="entry name" value="6PGD_dom2"/>
</dbReference>
<dbReference type="InterPro" id="IPR013023">
    <property type="entry name" value="KARI"/>
</dbReference>
<dbReference type="InterPro" id="IPR000506">
    <property type="entry name" value="KARI_C"/>
</dbReference>
<dbReference type="InterPro" id="IPR013116">
    <property type="entry name" value="KARI_N"/>
</dbReference>
<dbReference type="InterPro" id="IPR036291">
    <property type="entry name" value="NAD(P)-bd_dom_sf"/>
</dbReference>
<dbReference type="NCBIfam" id="TIGR00465">
    <property type="entry name" value="ilvC"/>
    <property type="match status" value="1"/>
</dbReference>
<dbReference type="NCBIfam" id="NF003557">
    <property type="entry name" value="PRK05225.1"/>
    <property type="match status" value="1"/>
</dbReference>
<dbReference type="PANTHER" id="PTHR21371">
    <property type="entry name" value="KETOL-ACID REDUCTOISOMERASE, MITOCHONDRIAL"/>
    <property type="match status" value="1"/>
</dbReference>
<dbReference type="PANTHER" id="PTHR21371:SF1">
    <property type="entry name" value="KETOL-ACID REDUCTOISOMERASE, MITOCHONDRIAL"/>
    <property type="match status" value="1"/>
</dbReference>
<dbReference type="Pfam" id="PF01450">
    <property type="entry name" value="KARI_C"/>
    <property type="match status" value="2"/>
</dbReference>
<dbReference type="Pfam" id="PF07991">
    <property type="entry name" value="KARI_N"/>
    <property type="match status" value="1"/>
</dbReference>
<dbReference type="SUPFAM" id="SSF48179">
    <property type="entry name" value="6-phosphogluconate dehydrogenase C-terminal domain-like"/>
    <property type="match status" value="2"/>
</dbReference>
<dbReference type="SUPFAM" id="SSF51735">
    <property type="entry name" value="NAD(P)-binding Rossmann-fold domains"/>
    <property type="match status" value="1"/>
</dbReference>
<dbReference type="PROSITE" id="PS51851">
    <property type="entry name" value="KARI_C"/>
    <property type="match status" value="2"/>
</dbReference>
<dbReference type="PROSITE" id="PS51850">
    <property type="entry name" value="KARI_N"/>
    <property type="match status" value="1"/>
</dbReference>
<sequence>MANYFNTLNLREQLDQLGRCRFMDRSEFATEADYLKGKKVVIVGCGAQGLNQGLNMRDSGLDVAYALRQAAIDEQRQSYKNAKENGFEVGSYETLIPQADLVVNLTPDKQHTNVVETVMPLMKEGAALGYSHGFNVVEEGMQIRKDLTVVMVAPKCPGTEVREEYKRGFGVPTLIAVHPENDPKGEGWDIAKAWAAATGGHRAGCLESSFVAEVKSDLMGEQTILCGMLQAGSIVCYEKMVAEGIDPGYAGKLLQYGWETITEALKFGGITHMMDRLSNPAKIKAFELSEELKDLMRPLYNKHMDDIISGHFSSTMMADWANDDANLLGWRAETGETAFENYPSTDVEISEQEYFDNGILMVAMVRAGVELAFEAMTASGIIDESAYYESLHELPLIANTIARKRLYEMNVVISDTAEYGNYLFANVATPLLREKFMPSVGTDVIGKGLGETSNQVDNATLIAVNETIRNHPVEYIGEELRGYMTDMKRIAVGG</sequence>
<accession>Q7MQH3</accession>
<organism>
    <name type="scientific">Vibrio vulnificus (strain YJ016)</name>
    <dbReference type="NCBI Taxonomy" id="196600"/>
    <lineage>
        <taxon>Bacteria</taxon>
        <taxon>Pseudomonadati</taxon>
        <taxon>Pseudomonadota</taxon>
        <taxon>Gammaproteobacteria</taxon>
        <taxon>Vibrionales</taxon>
        <taxon>Vibrionaceae</taxon>
        <taxon>Vibrio</taxon>
    </lineage>
</organism>